<dbReference type="EC" id="6.3.5.3" evidence="1"/>
<dbReference type="EMBL" id="AE010300">
    <property type="protein sequence ID" value="AAN48522.1"/>
    <property type="molecule type" value="Genomic_DNA"/>
</dbReference>
<dbReference type="RefSeq" id="NP_711504.1">
    <property type="nucleotide sequence ID" value="NC_004342.2"/>
</dbReference>
<dbReference type="RefSeq" id="WP_000409813.1">
    <property type="nucleotide sequence ID" value="NC_004342.2"/>
</dbReference>
<dbReference type="SMR" id="Q8F6I3"/>
<dbReference type="FunCoup" id="Q8F6I3">
    <property type="interactions" value="462"/>
</dbReference>
<dbReference type="STRING" id="189518.LA_1323"/>
<dbReference type="PaxDb" id="189518-LA_1323"/>
<dbReference type="EnsemblBacteria" id="AAN48522">
    <property type="protein sequence ID" value="AAN48522"/>
    <property type="gene ID" value="LA_1323"/>
</dbReference>
<dbReference type="KEGG" id="lil:LA_1323"/>
<dbReference type="PATRIC" id="fig|189518.3.peg.1321"/>
<dbReference type="HOGENOM" id="CLU_003100_0_1_12"/>
<dbReference type="InParanoid" id="Q8F6I3"/>
<dbReference type="OrthoDB" id="9804441at2"/>
<dbReference type="UniPathway" id="UPA00074">
    <property type="reaction ID" value="UER00128"/>
</dbReference>
<dbReference type="Proteomes" id="UP000001408">
    <property type="component" value="Chromosome I"/>
</dbReference>
<dbReference type="GO" id="GO:0005737">
    <property type="term" value="C:cytoplasm"/>
    <property type="evidence" value="ECO:0007669"/>
    <property type="project" value="UniProtKB-SubCell"/>
</dbReference>
<dbReference type="GO" id="GO:0005524">
    <property type="term" value="F:ATP binding"/>
    <property type="evidence" value="ECO:0007669"/>
    <property type="project" value="UniProtKB-UniRule"/>
</dbReference>
<dbReference type="GO" id="GO:0000287">
    <property type="term" value="F:magnesium ion binding"/>
    <property type="evidence" value="ECO:0007669"/>
    <property type="project" value="UniProtKB-UniRule"/>
</dbReference>
<dbReference type="GO" id="GO:0004642">
    <property type="term" value="F:phosphoribosylformylglycinamidine synthase activity"/>
    <property type="evidence" value="ECO:0000318"/>
    <property type="project" value="GO_Central"/>
</dbReference>
<dbReference type="GO" id="GO:0006189">
    <property type="term" value="P:'de novo' IMP biosynthetic process"/>
    <property type="evidence" value="ECO:0007669"/>
    <property type="project" value="UniProtKB-UniRule"/>
</dbReference>
<dbReference type="GO" id="GO:0006164">
    <property type="term" value="P:purine nucleotide biosynthetic process"/>
    <property type="evidence" value="ECO:0000318"/>
    <property type="project" value="GO_Central"/>
</dbReference>
<dbReference type="CDD" id="cd02203">
    <property type="entry name" value="PurL_repeat1"/>
    <property type="match status" value="1"/>
</dbReference>
<dbReference type="CDD" id="cd02204">
    <property type="entry name" value="PurL_repeat2"/>
    <property type="match status" value="1"/>
</dbReference>
<dbReference type="FunFam" id="3.30.1330.10:FF:000004">
    <property type="entry name" value="Phosphoribosylformylglycinamidine synthase subunit PurL"/>
    <property type="match status" value="1"/>
</dbReference>
<dbReference type="Gene3D" id="3.90.650.10">
    <property type="entry name" value="PurM-like C-terminal domain"/>
    <property type="match status" value="2"/>
</dbReference>
<dbReference type="Gene3D" id="3.30.1330.10">
    <property type="entry name" value="PurM-like, N-terminal domain"/>
    <property type="match status" value="2"/>
</dbReference>
<dbReference type="HAMAP" id="MF_00420">
    <property type="entry name" value="PurL_2"/>
    <property type="match status" value="1"/>
</dbReference>
<dbReference type="InterPro" id="IPR010074">
    <property type="entry name" value="PRibForGlyAmidine_synth_PurL"/>
</dbReference>
<dbReference type="InterPro" id="IPR041609">
    <property type="entry name" value="PurL_linker"/>
</dbReference>
<dbReference type="InterPro" id="IPR010918">
    <property type="entry name" value="PurM-like_C_dom"/>
</dbReference>
<dbReference type="InterPro" id="IPR036676">
    <property type="entry name" value="PurM-like_C_sf"/>
</dbReference>
<dbReference type="InterPro" id="IPR016188">
    <property type="entry name" value="PurM-like_N"/>
</dbReference>
<dbReference type="InterPro" id="IPR036921">
    <property type="entry name" value="PurM-like_N_sf"/>
</dbReference>
<dbReference type="NCBIfam" id="TIGR01736">
    <property type="entry name" value="FGAM_synth_II"/>
    <property type="match status" value="1"/>
</dbReference>
<dbReference type="NCBIfam" id="NF002290">
    <property type="entry name" value="PRK01213.1"/>
    <property type="match status" value="1"/>
</dbReference>
<dbReference type="PANTHER" id="PTHR43555">
    <property type="entry name" value="PHOSPHORIBOSYLFORMYLGLYCINAMIDINE SYNTHASE SUBUNIT PURL"/>
    <property type="match status" value="1"/>
</dbReference>
<dbReference type="PANTHER" id="PTHR43555:SF1">
    <property type="entry name" value="PHOSPHORIBOSYLFORMYLGLYCINAMIDINE SYNTHASE SUBUNIT PURL"/>
    <property type="match status" value="1"/>
</dbReference>
<dbReference type="Pfam" id="PF00586">
    <property type="entry name" value="AIRS"/>
    <property type="match status" value="2"/>
</dbReference>
<dbReference type="Pfam" id="PF02769">
    <property type="entry name" value="AIRS_C"/>
    <property type="match status" value="2"/>
</dbReference>
<dbReference type="Pfam" id="PF18072">
    <property type="entry name" value="FGAR-AT_linker"/>
    <property type="match status" value="1"/>
</dbReference>
<dbReference type="PIRSF" id="PIRSF001587">
    <property type="entry name" value="FGAM_synthase_II"/>
    <property type="match status" value="1"/>
</dbReference>
<dbReference type="SUPFAM" id="SSF56042">
    <property type="entry name" value="PurM C-terminal domain-like"/>
    <property type="match status" value="2"/>
</dbReference>
<dbReference type="SUPFAM" id="SSF55326">
    <property type="entry name" value="PurM N-terminal domain-like"/>
    <property type="match status" value="2"/>
</dbReference>
<proteinExistence type="inferred from homology"/>
<reference key="1">
    <citation type="journal article" date="2003" name="Nature">
        <title>Unique physiological and pathogenic features of Leptospira interrogans revealed by whole-genome sequencing.</title>
        <authorList>
            <person name="Ren S.-X."/>
            <person name="Fu G."/>
            <person name="Jiang X.-G."/>
            <person name="Zeng R."/>
            <person name="Miao Y.-G."/>
            <person name="Xu H."/>
            <person name="Zhang Y.-X."/>
            <person name="Xiong H."/>
            <person name="Lu G."/>
            <person name="Lu L.-F."/>
            <person name="Jiang H.-Q."/>
            <person name="Jia J."/>
            <person name="Tu Y.-F."/>
            <person name="Jiang J.-X."/>
            <person name="Gu W.-Y."/>
            <person name="Zhang Y.-Q."/>
            <person name="Cai Z."/>
            <person name="Sheng H.-H."/>
            <person name="Yin H.-F."/>
            <person name="Zhang Y."/>
            <person name="Zhu G.-F."/>
            <person name="Wan M."/>
            <person name="Huang H.-L."/>
            <person name="Qian Z."/>
            <person name="Wang S.-Y."/>
            <person name="Ma W."/>
            <person name="Yao Z.-J."/>
            <person name="Shen Y."/>
            <person name="Qiang B.-Q."/>
            <person name="Xia Q.-C."/>
            <person name="Guo X.-K."/>
            <person name="Danchin A."/>
            <person name="Saint Girons I."/>
            <person name="Somerville R.L."/>
            <person name="Wen Y.-M."/>
            <person name="Shi M.-H."/>
            <person name="Chen Z."/>
            <person name="Xu J.-G."/>
            <person name="Zhao G.-P."/>
        </authorList>
    </citation>
    <scope>NUCLEOTIDE SEQUENCE [LARGE SCALE GENOMIC DNA]</scope>
    <source>
        <strain>56601</strain>
    </source>
</reference>
<accession>Q8F6I3</accession>
<feature type="chain" id="PRO_0000100466" description="Phosphoribosylformylglycinamidine synthase subunit PurL">
    <location>
        <begin position="1"/>
        <end position="745"/>
    </location>
</feature>
<feature type="active site" evidence="1">
    <location>
        <position position="47"/>
    </location>
</feature>
<feature type="active site" description="Proton acceptor" evidence="1">
    <location>
        <position position="94"/>
    </location>
</feature>
<feature type="binding site" evidence="1">
    <location>
        <position position="50"/>
    </location>
    <ligand>
        <name>ATP</name>
        <dbReference type="ChEBI" id="CHEBI:30616"/>
    </ligand>
</feature>
<feature type="binding site" evidence="1">
    <location>
        <position position="90"/>
    </location>
    <ligand>
        <name>ATP</name>
        <dbReference type="ChEBI" id="CHEBI:30616"/>
    </ligand>
</feature>
<feature type="binding site" evidence="1">
    <location>
        <position position="92"/>
    </location>
    <ligand>
        <name>Mg(2+)</name>
        <dbReference type="ChEBI" id="CHEBI:18420"/>
        <label>1</label>
    </ligand>
</feature>
<feature type="binding site" evidence="1">
    <location>
        <begin position="93"/>
        <end position="96"/>
    </location>
    <ligand>
        <name>substrate</name>
    </ligand>
</feature>
<feature type="binding site" evidence="1">
    <location>
        <position position="115"/>
    </location>
    <ligand>
        <name>substrate</name>
    </ligand>
</feature>
<feature type="binding site" evidence="1">
    <location>
        <position position="116"/>
    </location>
    <ligand>
        <name>Mg(2+)</name>
        <dbReference type="ChEBI" id="CHEBI:18420"/>
        <label>2</label>
    </ligand>
</feature>
<feature type="binding site" evidence="1">
    <location>
        <position position="240"/>
    </location>
    <ligand>
        <name>substrate</name>
    </ligand>
</feature>
<feature type="binding site" evidence="1">
    <location>
        <position position="268"/>
    </location>
    <ligand>
        <name>Mg(2+)</name>
        <dbReference type="ChEBI" id="CHEBI:18420"/>
        <label>2</label>
    </ligand>
</feature>
<feature type="binding site" evidence="1">
    <location>
        <begin position="312"/>
        <end position="314"/>
    </location>
    <ligand>
        <name>substrate</name>
    </ligand>
</feature>
<feature type="binding site" evidence="1">
    <location>
        <position position="501"/>
    </location>
    <ligand>
        <name>ATP</name>
        <dbReference type="ChEBI" id="CHEBI:30616"/>
    </ligand>
</feature>
<feature type="binding site" evidence="1">
    <location>
        <position position="538"/>
    </location>
    <ligand>
        <name>ATP</name>
        <dbReference type="ChEBI" id="CHEBI:30616"/>
    </ligand>
</feature>
<feature type="binding site" evidence="1">
    <location>
        <position position="539"/>
    </location>
    <ligand>
        <name>Mg(2+)</name>
        <dbReference type="ChEBI" id="CHEBI:18420"/>
        <label>1</label>
    </ligand>
</feature>
<feature type="binding site" evidence="1">
    <location>
        <position position="541"/>
    </location>
    <ligand>
        <name>substrate</name>
    </ligand>
</feature>
<name>PURL_LEPIN</name>
<sequence>MEKDVVSLEDALEHGLTKEEFQKIQEILGRIPNSTELGIFSAMWSEHCSYKNSILKLKTLPTTSDKLLAKAGEENAGAMDIGDGLAVVFKIESHNHPTAVEPYQGAATGVGGIMRDIFTMGARPIVSLNSLRFGNPDEPKNKYLLSRAVKGIGDYGNSLGIAVSGGELFIDECFSKNPLVNAMTVGIVRHDQMASATTGGQIGNSVYIVGATTGRDGIHGASFASKDLSKESESKRSAVQVGDPFMEKLLMEASLEAIQKGLLVGIQDMGAAGISCATSEMSAKGKTGMKIDLDLVPFRETGMNAYEAMLSESQERMLVVPKKGKESELVSIFEKWNLNAVKIGEVTADGMIEIYMGGKLKAKIPAESLVLGGGAPRYERETKRPSYLDAVKTWKPDEIPDVTKGANSKEILLKILSSWNVCSRKPITEQYDSEVGLVKLIGPGLDGGLSAIPGTNKALATATDCNSRYTYLDPYKGAEFAVCEAARNVYVTGATPYGVTNNLNFANPYIPENYYIFSECIRGMGDACRFLGLPVTGGNVSFYNESPEGPIFPTPTIGMVGILENKEKLIFNFPKEIGVELAVLGNFRPSLGGSEYLKKIHGQINGSIPELDIKEELELCKLILSLNESRILKSAKDLSLGGIAVALSKTVLFSGLGIESDLTSLRRNRLDLTLFGESSTAVLVGFDSLSKEDIRKQTEAYGLKFYPIGKTNSSGILEIKDAEIKISFQELSGPYEKGLEAVFAL</sequence>
<comment type="function">
    <text evidence="1">Part of the phosphoribosylformylglycinamidine synthase complex involved in the purines biosynthetic pathway. Catalyzes the ATP-dependent conversion of formylglycinamide ribonucleotide (FGAR) and glutamine to yield formylglycinamidine ribonucleotide (FGAM) and glutamate. The FGAM synthase complex is composed of three subunits. PurQ produces an ammonia molecule by converting glutamine to glutamate. PurL transfers the ammonia molecule to FGAR to form FGAM in an ATP-dependent manner. PurS interacts with PurQ and PurL and is thought to assist in the transfer of the ammonia molecule from PurQ to PurL.</text>
</comment>
<comment type="catalytic activity">
    <reaction evidence="1">
        <text>N(2)-formyl-N(1)-(5-phospho-beta-D-ribosyl)glycinamide + L-glutamine + ATP + H2O = 2-formamido-N(1)-(5-O-phospho-beta-D-ribosyl)acetamidine + L-glutamate + ADP + phosphate + H(+)</text>
        <dbReference type="Rhea" id="RHEA:17129"/>
        <dbReference type="ChEBI" id="CHEBI:15377"/>
        <dbReference type="ChEBI" id="CHEBI:15378"/>
        <dbReference type="ChEBI" id="CHEBI:29985"/>
        <dbReference type="ChEBI" id="CHEBI:30616"/>
        <dbReference type="ChEBI" id="CHEBI:43474"/>
        <dbReference type="ChEBI" id="CHEBI:58359"/>
        <dbReference type="ChEBI" id="CHEBI:147286"/>
        <dbReference type="ChEBI" id="CHEBI:147287"/>
        <dbReference type="ChEBI" id="CHEBI:456216"/>
        <dbReference type="EC" id="6.3.5.3"/>
    </reaction>
</comment>
<comment type="pathway">
    <text evidence="1">Purine metabolism; IMP biosynthesis via de novo pathway; 5-amino-1-(5-phospho-D-ribosyl)imidazole from N(2)-formyl-N(1)-(5-phospho-D-ribosyl)glycinamide: step 1/2.</text>
</comment>
<comment type="subunit">
    <text evidence="1">Monomer. Part of the FGAM synthase complex composed of 1 PurL, 1 PurQ and 2 PurS subunits.</text>
</comment>
<comment type="subcellular location">
    <subcellularLocation>
        <location evidence="1">Cytoplasm</location>
    </subcellularLocation>
</comment>
<comment type="similarity">
    <text evidence="1">Belongs to the FGAMS family.</text>
</comment>
<keyword id="KW-0067">ATP-binding</keyword>
<keyword id="KW-0963">Cytoplasm</keyword>
<keyword id="KW-0436">Ligase</keyword>
<keyword id="KW-0460">Magnesium</keyword>
<keyword id="KW-0479">Metal-binding</keyword>
<keyword id="KW-0547">Nucleotide-binding</keyword>
<keyword id="KW-0658">Purine biosynthesis</keyword>
<keyword id="KW-1185">Reference proteome</keyword>
<organism>
    <name type="scientific">Leptospira interrogans serogroup Icterohaemorrhagiae serovar Lai (strain 56601)</name>
    <dbReference type="NCBI Taxonomy" id="189518"/>
    <lineage>
        <taxon>Bacteria</taxon>
        <taxon>Pseudomonadati</taxon>
        <taxon>Spirochaetota</taxon>
        <taxon>Spirochaetia</taxon>
        <taxon>Leptospirales</taxon>
        <taxon>Leptospiraceae</taxon>
        <taxon>Leptospira</taxon>
    </lineage>
</organism>
<gene>
    <name evidence="1" type="primary">purL</name>
    <name type="ordered locus">LA_1323</name>
</gene>
<protein>
    <recommendedName>
        <fullName evidence="1">Phosphoribosylformylglycinamidine synthase subunit PurL</fullName>
        <shortName evidence="1">FGAM synthase</shortName>
        <ecNumber evidence="1">6.3.5.3</ecNumber>
    </recommendedName>
    <alternativeName>
        <fullName evidence="1">Formylglycinamide ribonucleotide amidotransferase subunit II</fullName>
        <shortName evidence="1">FGAR amidotransferase II</shortName>
        <shortName evidence="1">FGAR-AT II</shortName>
    </alternativeName>
    <alternativeName>
        <fullName evidence="1">Glutamine amidotransferase PurL</fullName>
    </alternativeName>
    <alternativeName>
        <fullName evidence="1">Phosphoribosylformylglycinamidine synthase subunit II</fullName>
    </alternativeName>
</protein>
<evidence type="ECO:0000255" key="1">
    <source>
        <dbReference type="HAMAP-Rule" id="MF_00420"/>
    </source>
</evidence>